<protein>
    <recommendedName>
        <fullName>Pyrrolidone-carboxylate peptidase</fullName>
        <ecNumber>3.4.19.3</ecNumber>
    </recommendedName>
    <alternativeName>
        <fullName>5-oxoprolyl-peptidase</fullName>
    </alternativeName>
    <alternativeName>
        <fullName>Pyroglutamyl-peptidase I</fullName>
        <shortName>PGP-I</shortName>
        <shortName>Pyrase</shortName>
    </alternativeName>
</protein>
<reference key="1">
    <citation type="submission" date="1997-06" db="EMBL/GenBank/DDBJ databases">
        <title>Cloning and sequencing of the pcp gene from Mycobacterium bovis BCG.</title>
        <authorList>
            <person name="Kim J.K."/>
            <person name="Choe Y.K."/>
        </authorList>
    </citation>
    <scope>NUCLEOTIDE SEQUENCE [GENOMIC DNA]</scope>
    <source>
        <strain>BCG / Pasteur</strain>
    </source>
</reference>
<reference key="2">
    <citation type="journal article" date="2003" name="Proc. Natl. Acad. Sci. U.S.A.">
        <title>The complete genome sequence of Mycobacterium bovis.</title>
        <authorList>
            <person name="Garnier T."/>
            <person name="Eiglmeier K."/>
            <person name="Camus J.-C."/>
            <person name="Medina N."/>
            <person name="Mansoor H."/>
            <person name="Pryor M."/>
            <person name="Duthoy S."/>
            <person name="Grondin S."/>
            <person name="Lacroix C."/>
            <person name="Monsempe C."/>
            <person name="Simon S."/>
            <person name="Harris B."/>
            <person name="Atkin R."/>
            <person name="Doggett J."/>
            <person name="Mayes R."/>
            <person name="Keating L."/>
            <person name="Wheeler P.R."/>
            <person name="Parkhill J."/>
            <person name="Barrell B.G."/>
            <person name="Cole S.T."/>
            <person name="Gordon S.V."/>
            <person name="Hewinson R.G."/>
        </authorList>
    </citation>
    <scope>NUCLEOTIDE SEQUENCE [LARGE SCALE GENOMIC DNA]</scope>
    <source>
        <strain>ATCC BAA-935 / AF2122/97</strain>
    </source>
</reference>
<reference key="3">
    <citation type="journal article" date="2017" name="Genome Announc.">
        <title>Updated reference genome sequence and annotation of Mycobacterium bovis AF2122/97.</title>
        <authorList>
            <person name="Malone K.M."/>
            <person name="Farrell D."/>
            <person name="Stuber T.P."/>
            <person name="Schubert O.T."/>
            <person name="Aebersold R."/>
            <person name="Robbe-Austerman S."/>
            <person name="Gordon S.V."/>
        </authorList>
    </citation>
    <scope>NUCLEOTIDE SEQUENCE [LARGE SCALE GENOMIC DNA]</scope>
    <scope>GENOME REANNOTATION</scope>
    <source>
        <strain>ATCC BAA-935 / AF2122/97</strain>
    </source>
</reference>
<proteinExistence type="inferred from homology"/>
<dbReference type="EC" id="3.4.19.3"/>
<dbReference type="EMBL" id="U91845">
    <property type="protein sequence ID" value="AAB63524.1"/>
    <property type="molecule type" value="Genomic_DNA"/>
</dbReference>
<dbReference type="EMBL" id="LT708304">
    <property type="protein sequence ID" value="SIT98870.1"/>
    <property type="molecule type" value="Genomic_DNA"/>
</dbReference>
<dbReference type="RefSeq" id="NP_853991.1">
    <property type="nucleotide sequence ID" value="NC_002945.3"/>
</dbReference>
<dbReference type="RefSeq" id="WP_003401632.1">
    <property type="nucleotide sequence ID" value="NC_002945.4"/>
</dbReference>
<dbReference type="SMR" id="P0A5R5"/>
<dbReference type="MEROPS" id="C15.001"/>
<dbReference type="GeneID" id="45424287"/>
<dbReference type="PATRIC" id="fig|233413.5.peg.357"/>
<dbReference type="Proteomes" id="UP000001419">
    <property type="component" value="Chromosome"/>
</dbReference>
<dbReference type="GO" id="GO:0005829">
    <property type="term" value="C:cytosol"/>
    <property type="evidence" value="ECO:0007669"/>
    <property type="project" value="InterPro"/>
</dbReference>
<dbReference type="GO" id="GO:0016920">
    <property type="term" value="F:pyroglutamyl-peptidase activity"/>
    <property type="evidence" value="ECO:0007669"/>
    <property type="project" value="UniProtKB-UniRule"/>
</dbReference>
<dbReference type="GO" id="GO:0006508">
    <property type="term" value="P:proteolysis"/>
    <property type="evidence" value="ECO:0007669"/>
    <property type="project" value="UniProtKB-KW"/>
</dbReference>
<dbReference type="CDD" id="cd00501">
    <property type="entry name" value="Peptidase_C15"/>
    <property type="match status" value="1"/>
</dbReference>
<dbReference type="Gene3D" id="3.40.630.20">
    <property type="entry name" value="Peptidase C15, pyroglutamyl peptidase I-like"/>
    <property type="match status" value="1"/>
</dbReference>
<dbReference type="HAMAP" id="MF_00417">
    <property type="entry name" value="Pyrrolid_peptidase"/>
    <property type="match status" value="1"/>
</dbReference>
<dbReference type="InterPro" id="IPR000816">
    <property type="entry name" value="Peptidase_C15"/>
</dbReference>
<dbReference type="InterPro" id="IPR016125">
    <property type="entry name" value="Peptidase_C15-like"/>
</dbReference>
<dbReference type="InterPro" id="IPR036440">
    <property type="entry name" value="Peptidase_C15-like_sf"/>
</dbReference>
<dbReference type="InterPro" id="IPR029762">
    <property type="entry name" value="PGP-I_bact-type"/>
</dbReference>
<dbReference type="InterPro" id="IPR033694">
    <property type="entry name" value="PGPEP1_Cys_AS"/>
</dbReference>
<dbReference type="InterPro" id="IPR033693">
    <property type="entry name" value="PGPEP1_Glu_AS"/>
</dbReference>
<dbReference type="NCBIfam" id="NF009674">
    <property type="entry name" value="PRK13195.1"/>
    <property type="match status" value="1"/>
</dbReference>
<dbReference type="NCBIfam" id="NF009676">
    <property type="entry name" value="PRK13197.1"/>
    <property type="match status" value="1"/>
</dbReference>
<dbReference type="NCBIfam" id="TIGR00504">
    <property type="entry name" value="pyro_pdase"/>
    <property type="match status" value="1"/>
</dbReference>
<dbReference type="PANTHER" id="PTHR23402">
    <property type="entry name" value="PROTEASE FAMILY C15 PYROGLUTAMYL-PEPTIDASE I-RELATED"/>
    <property type="match status" value="1"/>
</dbReference>
<dbReference type="PANTHER" id="PTHR23402:SF1">
    <property type="entry name" value="PYROGLUTAMYL-PEPTIDASE I"/>
    <property type="match status" value="1"/>
</dbReference>
<dbReference type="Pfam" id="PF01470">
    <property type="entry name" value="Peptidase_C15"/>
    <property type="match status" value="1"/>
</dbReference>
<dbReference type="PIRSF" id="PIRSF015592">
    <property type="entry name" value="Prld-crbxl_pptds"/>
    <property type="match status" value="1"/>
</dbReference>
<dbReference type="PRINTS" id="PR00706">
    <property type="entry name" value="PYROGLUPTASE"/>
</dbReference>
<dbReference type="SUPFAM" id="SSF53182">
    <property type="entry name" value="Pyrrolidone carboxyl peptidase (pyroglutamate aminopeptidase)"/>
    <property type="match status" value="1"/>
</dbReference>
<dbReference type="PROSITE" id="PS01334">
    <property type="entry name" value="PYRASE_CYS"/>
    <property type="match status" value="1"/>
</dbReference>
<dbReference type="PROSITE" id="PS01333">
    <property type="entry name" value="PYRASE_GLU"/>
    <property type="match status" value="1"/>
</dbReference>
<organism>
    <name type="scientific">Mycobacterium bovis (strain ATCC BAA-935 / AF2122/97)</name>
    <dbReference type="NCBI Taxonomy" id="233413"/>
    <lineage>
        <taxon>Bacteria</taxon>
        <taxon>Bacillati</taxon>
        <taxon>Actinomycetota</taxon>
        <taxon>Actinomycetes</taxon>
        <taxon>Mycobacteriales</taxon>
        <taxon>Mycobacteriaceae</taxon>
        <taxon>Mycobacterium</taxon>
        <taxon>Mycobacterium tuberculosis complex</taxon>
    </lineage>
</organism>
<comment type="function">
    <text evidence="1">Removes 5-oxoproline from various penultimate amino acid residues except L-proline.</text>
</comment>
<comment type="catalytic activity">
    <reaction>
        <text>Release of an N-terminal pyroglutamyl group from a polypeptide, the second amino acid generally not being Pro.</text>
        <dbReference type="EC" id="3.4.19.3"/>
    </reaction>
</comment>
<comment type="subunit">
    <text evidence="1">Homotetramer.</text>
</comment>
<comment type="subcellular location">
    <subcellularLocation>
        <location evidence="1">Cytoplasm</location>
    </subcellularLocation>
</comment>
<comment type="similarity">
    <text evidence="2">Belongs to the peptidase C15 family.</text>
</comment>
<sequence>MSKVLVTGFGPYGVTPVNPAQLTAEELDGRTIAGATVISRIVPNTFFESIAAAQQAIAEIEPALVIMLGEYPGRSMITVERLAQNVNDCGRYGLADCAGRVLVGEPTDPAGPVAYHATVPVRAMVLAMRKAGVPADVSDAAGTFVCNHLMYGVLHHLAQKGLPVRAGWIHLPCLPSVAALDHNLGVPSMSVQTAVAGVTAGIEAAIRQSADIREPIPSRLQI</sequence>
<gene>
    <name type="primary">pcp</name>
    <name type="ordered locus">BQ2027_MB0327</name>
</gene>
<accession>P0A5R5</accession>
<accession>A0A1R3XUZ8</accession>
<accession>O07930</accession>
<accession>X2BEP1</accession>
<keyword id="KW-0963">Cytoplasm</keyword>
<keyword id="KW-0378">Hydrolase</keyword>
<keyword id="KW-0645">Protease</keyword>
<keyword id="KW-1185">Reference proteome</keyword>
<keyword id="KW-0788">Thiol protease</keyword>
<feature type="chain" id="PRO_0000184723" description="Pyrrolidone-carboxylate peptidase">
    <location>
        <begin position="1"/>
        <end position="222"/>
    </location>
</feature>
<feature type="active site" evidence="1">
    <location>
        <position position="80"/>
    </location>
</feature>
<feature type="active site" evidence="1">
    <location>
        <position position="146"/>
    </location>
</feature>
<feature type="active site" evidence="1">
    <location>
        <position position="170"/>
    </location>
</feature>
<name>PCP_MYCBO</name>
<evidence type="ECO:0000250" key="1"/>
<evidence type="ECO:0000305" key="2"/>